<comment type="function">
    <text evidence="1">Bifunctional enzyme that catalyzes the enolization of 2,3-diketo-5-methylthiopentyl-1-phosphate (DK-MTP-1-P) into the intermediate 2-hydroxy-3-keto-5-methylthiopentenyl-1-phosphate (HK-MTPenyl-1-P), which is then dephosphorylated to form the acireductone 1,2-dihydroxy-3-keto-5-methylthiopentene (DHK-MTPene).</text>
</comment>
<comment type="catalytic activity">
    <reaction evidence="1">
        <text>5-methylsulfanyl-2,3-dioxopentyl phosphate + H2O = 1,2-dihydroxy-5-(methylsulfanyl)pent-1-en-3-one + phosphate</text>
        <dbReference type="Rhea" id="RHEA:21700"/>
        <dbReference type="ChEBI" id="CHEBI:15377"/>
        <dbReference type="ChEBI" id="CHEBI:43474"/>
        <dbReference type="ChEBI" id="CHEBI:49252"/>
        <dbReference type="ChEBI" id="CHEBI:58828"/>
        <dbReference type="EC" id="3.1.3.77"/>
    </reaction>
</comment>
<comment type="cofactor">
    <cofactor evidence="1">
        <name>Mg(2+)</name>
        <dbReference type="ChEBI" id="CHEBI:18420"/>
    </cofactor>
    <text evidence="1">Binds 1 Mg(2+) ion per subunit.</text>
</comment>
<comment type="pathway">
    <text evidence="1">Amino-acid biosynthesis; L-methionine biosynthesis via salvage pathway; L-methionine from S-methyl-5-thio-alpha-D-ribose 1-phosphate: step 3/6.</text>
</comment>
<comment type="pathway">
    <text evidence="1">Amino-acid biosynthesis; L-methionine biosynthesis via salvage pathway; L-methionine from S-methyl-5-thio-alpha-D-ribose 1-phosphate: step 4/6.</text>
</comment>
<comment type="subunit">
    <text evidence="1">Monomer.</text>
</comment>
<comment type="similarity">
    <text evidence="1">Belongs to the HAD-like hydrolase superfamily. MasA/MtnC family.</text>
</comment>
<reference key="1">
    <citation type="journal article" date="2006" name="Genome Biol.">
        <title>Genomic analysis reveals that Pseudomonas aeruginosa virulence is combinatorial.</title>
        <authorList>
            <person name="Lee D.G."/>
            <person name="Urbach J.M."/>
            <person name="Wu G."/>
            <person name="Liberati N.T."/>
            <person name="Feinbaum R.L."/>
            <person name="Miyata S."/>
            <person name="Diggins L.T."/>
            <person name="He J."/>
            <person name="Saucier M."/>
            <person name="Deziel E."/>
            <person name="Friedman L."/>
            <person name="Li L."/>
            <person name="Grills G."/>
            <person name="Montgomery K."/>
            <person name="Kucherlapati R."/>
            <person name="Rahme L.G."/>
            <person name="Ausubel F.M."/>
        </authorList>
    </citation>
    <scope>NUCLEOTIDE SEQUENCE [LARGE SCALE GENOMIC DNA]</scope>
    <source>
        <strain>UCBPP-PA14</strain>
    </source>
</reference>
<sequence length="225" mass="24070">MTIKAILTDIEGTTSAVSFVFDVLFPYAARHLPDFVREHAGEPEVAAQLAAVRAESGEADADVERAIAILLQWIAEDRKATPLKALQGMVWAQGYRDGQLKGHVYPDAVQALREWKARGLDLYVYSSGSIQAQKLIFGCSEAGDLGPLFSGYFDTTSGPKRESASYARIAGAIGLPAAEILFLSDVVQELDAARDAGMRTLGLAREGGSLDGHPTVASFADIVVE</sequence>
<protein>
    <recommendedName>
        <fullName evidence="1">Enolase-phosphatase E1</fullName>
        <ecNumber evidence="1">3.1.3.77</ecNumber>
    </recommendedName>
    <alternativeName>
        <fullName evidence="1">2,3-diketo-5-methylthio-1-phosphopentane phosphatase</fullName>
    </alternativeName>
</protein>
<name>MTNC_PSEAB</name>
<keyword id="KW-0028">Amino-acid biosynthesis</keyword>
<keyword id="KW-0378">Hydrolase</keyword>
<keyword id="KW-0460">Magnesium</keyword>
<keyword id="KW-0479">Metal-binding</keyword>
<keyword id="KW-0486">Methionine biosynthesis</keyword>
<gene>
    <name evidence="1" type="primary">mtnC</name>
    <name type="ordered locus">PA14_42720</name>
</gene>
<feature type="chain" id="PRO_0000357389" description="Enolase-phosphatase E1">
    <location>
        <begin position="1"/>
        <end position="225"/>
    </location>
</feature>
<organism>
    <name type="scientific">Pseudomonas aeruginosa (strain UCBPP-PA14)</name>
    <dbReference type="NCBI Taxonomy" id="208963"/>
    <lineage>
        <taxon>Bacteria</taxon>
        <taxon>Pseudomonadati</taxon>
        <taxon>Pseudomonadota</taxon>
        <taxon>Gammaproteobacteria</taxon>
        <taxon>Pseudomonadales</taxon>
        <taxon>Pseudomonadaceae</taxon>
        <taxon>Pseudomonas</taxon>
    </lineage>
</organism>
<proteinExistence type="inferred from homology"/>
<evidence type="ECO:0000255" key="1">
    <source>
        <dbReference type="HAMAP-Rule" id="MF_01681"/>
    </source>
</evidence>
<dbReference type="EC" id="3.1.3.77" evidence="1"/>
<dbReference type="EMBL" id="CP000438">
    <property type="protein sequence ID" value="ABJ10870.1"/>
    <property type="molecule type" value="Genomic_DNA"/>
</dbReference>
<dbReference type="RefSeq" id="WP_003087657.1">
    <property type="nucleotide sequence ID" value="NZ_CP034244.1"/>
</dbReference>
<dbReference type="SMR" id="Q02KH5"/>
<dbReference type="KEGG" id="pau:PA14_42720"/>
<dbReference type="PseudoCAP" id="PA14_42720"/>
<dbReference type="HOGENOM" id="CLU_023273_0_0_6"/>
<dbReference type="UniPathway" id="UPA00904">
    <property type="reaction ID" value="UER00876"/>
</dbReference>
<dbReference type="UniPathway" id="UPA00904">
    <property type="reaction ID" value="UER00877"/>
</dbReference>
<dbReference type="Proteomes" id="UP000000653">
    <property type="component" value="Chromosome"/>
</dbReference>
<dbReference type="GO" id="GO:0043715">
    <property type="term" value="F:2,3-diketo-5-methylthiopentyl-1-phosphate enolase activity"/>
    <property type="evidence" value="ECO:0007669"/>
    <property type="project" value="UniProtKB-UniRule"/>
</dbReference>
<dbReference type="GO" id="GO:0043716">
    <property type="term" value="F:2-hydroxy-3-keto-5-methylthiopentenyl-1-phosphate phosphatase activity"/>
    <property type="evidence" value="ECO:0007669"/>
    <property type="project" value="UniProtKB-UniRule"/>
</dbReference>
<dbReference type="GO" id="GO:0043874">
    <property type="term" value="F:acireductone synthase activity"/>
    <property type="evidence" value="ECO:0007669"/>
    <property type="project" value="UniProtKB-EC"/>
</dbReference>
<dbReference type="GO" id="GO:0000287">
    <property type="term" value="F:magnesium ion binding"/>
    <property type="evidence" value="ECO:0007669"/>
    <property type="project" value="UniProtKB-UniRule"/>
</dbReference>
<dbReference type="GO" id="GO:0019509">
    <property type="term" value="P:L-methionine salvage from methylthioadenosine"/>
    <property type="evidence" value="ECO:0007669"/>
    <property type="project" value="UniProtKB-UniRule"/>
</dbReference>
<dbReference type="CDD" id="cd01629">
    <property type="entry name" value="HAD_EP"/>
    <property type="match status" value="1"/>
</dbReference>
<dbReference type="FunFam" id="1.10.720.60:FF:000003">
    <property type="entry name" value="Enolase-phosphatase E1"/>
    <property type="match status" value="1"/>
</dbReference>
<dbReference type="FunFam" id="3.40.50.1000:FF:000079">
    <property type="entry name" value="Enolase-phosphatase E1"/>
    <property type="match status" value="1"/>
</dbReference>
<dbReference type="Gene3D" id="1.10.720.60">
    <property type="match status" value="1"/>
</dbReference>
<dbReference type="Gene3D" id="3.40.50.1000">
    <property type="entry name" value="HAD superfamily/HAD-like"/>
    <property type="match status" value="1"/>
</dbReference>
<dbReference type="HAMAP" id="MF_01681">
    <property type="entry name" value="Salvage_MtnC"/>
    <property type="match status" value="1"/>
</dbReference>
<dbReference type="InterPro" id="IPR023943">
    <property type="entry name" value="Enolase-ppase_E1"/>
</dbReference>
<dbReference type="InterPro" id="IPR036412">
    <property type="entry name" value="HAD-like_sf"/>
</dbReference>
<dbReference type="InterPro" id="IPR006439">
    <property type="entry name" value="HAD-SF_hydro_IA"/>
</dbReference>
<dbReference type="InterPro" id="IPR023214">
    <property type="entry name" value="HAD_sf"/>
</dbReference>
<dbReference type="NCBIfam" id="TIGR01691">
    <property type="entry name" value="enolase-ppase"/>
    <property type="match status" value="1"/>
</dbReference>
<dbReference type="PANTHER" id="PTHR20371">
    <property type="entry name" value="ENOLASE-PHOSPHATASE E1"/>
    <property type="match status" value="1"/>
</dbReference>
<dbReference type="PANTHER" id="PTHR20371:SF1">
    <property type="entry name" value="ENOLASE-PHOSPHATASE E1"/>
    <property type="match status" value="1"/>
</dbReference>
<dbReference type="Pfam" id="PF00702">
    <property type="entry name" value="Hydrolase"/>
    <property type="match status" value="1"/>
</dbReference>
<dbReference type="PRINTS" id="PR00413">
    <property type="entry name" value="HADHALOGNASE"/>
</dbReference>
<dbReference type="SFLD" id="SFLDG01133">
    <property type="entry name" value="C1.5.4:_Enolase-phosphatase_Li"/>
    <property type="match status" value="1"/>
</dbReference>
<dbReference type="SFLD" id="SFLDF00044">
    <property type="entry name" value="enolase-phosphatase"/>
    <property type="match status" value="1"/>
</dbReference>
<dbReference type="SUPFAM" id="SSF56784">
    <property type="entry name" value="HAD-like"/>
    <property type="match status" value="1"/>
</dbReference>
<accession>Q02KH5</accession>